<evidence type="ECO:0000255" key="1">
    <source>
        <dbReference type="HAMAP-Rule" id="MF_01058"/>
    </source>
</evidence>
<evidence type="ECO:0000256" key="2">
    <source>
        <dbReference type="SAM" id="MobiDB-lite"/>
    </source>
</evidence>
<dbReference type="EMBL" id="CP000857">
    <property type="protein sequence ID" value="ACN48171.1"/>
    <property type="molecule type" value="Genomic_DNA"/>
</dbReference>
<dbReference type="RefSeq" id="WP_000743291.1">
    <property type="nucleotide sequence ID" value="NC_012125.1"/>
</dbReference>
<dbReference type="SMR" id="C0Q3G9"/>
<dbReference type="KEGG" id="sei:SPC_4106"/>
<dbReference type="HOGENOM" id="CLU_094104_2_0_6"/>
<dbReference type="Proteomes" id="UP000001599">
    <property type="component" value="Chromosome"/>
</dbReference>
<dbReference type="GO" id="GO:0005096">
    <property type="term" value="F:GTPase activator activity"/>
    <property type="evidence" value="ECO:0007669"/>
    <property type="project" value="UniProtKB-KW"/>
</dbReference>
<dbReference type="GO" id="GO:0042254">
    <property type="term" value="P:ribosome biogenesis"/>
    <property type="evidence" value="ECO:0007669"/>
    <property type="project" value="UniProtKB-KW"/>
</dbReference>
<dbReference type="HAMAP" id="MF_01058">
    <property type="entry name" value="GAP_YihI"/>
    <property type="match status" value="1"/>
</dbReference>
<dbReference type="InterPro" id="IPR007336">
    <property type="entry name" value="YihI"/>
</dbReference>
<dbReference type="NCBIfam" id="NF003560">
    <property type="entry name" value="PRK05244.1-1"/>
    <property type="match status" value="1"/>
</dbReference>
<dbReference type="Pfam" id="PF04220">
    <property type="entry name" value="YihI"/>
    <property type="match status" value="1"/>
</dbReference>
<sequence>MKKPTSAPRSKAFGKQRRKTREELNQEARDRKRLKKHRGHAPGSRAAGGNSASGGGNQNQQKDPRIGSKTPVPLGVTEKVTQQHKPKSEKPMLSPQAELDLLETDERLDALLERLEAGETLSAEDQAWVDAKLDRIDELMQKLGLSYDDDDEDDEEDEKQEDMMRLLRGGN</sequence>
<feature type="chain" id="PRO_1000149676" description="Der GTPase-activating protein YihI">
    <location>
        <begin position="1"/>
        <end position="171"/>
    </location>
</feature>
<feature type="region of interest" description="Disordered" evidence="2">
    <location>
        <begin position="1"/>
        <end position="99"/>
    </location>
</feature>
<feature type="region of interest" description="Disordered" evidence="2">
    <location>
        <begin position="145"/>
        <end position="171"/>
    </location>
</feature>
<feature type="compositionally biased region" description="Basic and acidic residues" evidence="2">
    <location>
        <begin position="20"/>
        <end position="30"/>
    </location>
</feature>
<feature type="compositionally biased region" description="Basic residues" evidence="2">
    <location>
        <begin position="31"/>
        <end position="40"/>
    </location>
</feature>
<feature type="compositionally biased region" description="Acidic residues" evidence="2">
    <location>
        <begin position="147"/>
        <end position="160"/>
    </location>
</feature>
<comment type="function">
    <text evidence="1">A GTPase-activating protein (GAP) that modifies Der/EngA GTPase function. May play a role in ribosome biogenesis.</text>
</comment>
<comment type="subunit">
    <text evidence="1">Interacts with Der.</text>
</comment>
<comment type="similarity">
    <text evidence="1">Belongs to the YihI family.</text>
</comment>
<proteinExistence type="inferred from homology"/>
<organism>
    <name type="scientific">Salmonella paratyphi C (strain RKS4594)</name>
    <dbReference type="NCBI Taxonomy" id="476213"/>
    <lineage>
        <taxon>Bacteria</taxon>
        <taxon>Pseudomonadati</taxon>
        <taxon>Pseudomonadota</taxon>
        <taxon>Gammaproteobacteria</taxon>
        <taxon>Enterobacterales</taxon>
        <taxon>Enterobacteriaceae</taxon>
        <taxon>Salmonella</taxon>
    </lineage>
</organism>
<gene>
    <name evidence="1" type="primary">yihI</name>
    <name type="ordered locus">SPC_4106</name>
</gene>
<protein>
    <recommendedName>
        <fullName evidence="1">Der GTPase-activating protein YihI</fullName>
    </recommendedName>
</protein>
<name>YIHI_SALPC</name>
<reference key="1">
    <citation type="journal article" date="2009" name="PLoS ONE">
        <title>Salmonella paratyphi C: genetic divergence from Salmonella choleraesuis and pathogenic convergence with Salmonella typhi.</title>
        <authorList>
            <person name="Liu W.-Q."/>
            <person name="Feng Y."/>
            <person name="Wang Y."/>
            <person name="Zou Q.-H."/>
            <person name="Chen F."/>
            <person name="Guo J.-T."/>
            <person name="Peng Y.-H."/>
            <person name="Jin Y."/>
            <person name="Li Y.-G."/>
            <person name="Hu S.-N."/>
            <person name="Johnston R.N."/>
            <person name="Liu G.-R."/>
            <person name="Liu S.-L."/>
        </authorList>
    </citation>
    <scope>NUCLEOTIDE SEQUENCE [LARGE SCALE GENOMIC DNA]</scope>
    <source>
        <strain>RKS4594</strain>
    </source>
</reference>
<accession>C0Q3G9</accession>
<keyword id="KW-0343">GTPase activation</keyword>
<keyword id="KW-0690">Ribosome biogenesis</keyword>